<reference key="1">
    <citation type="journal article" date="2002" name="J. Bacteriol.">
        <title>Whole-genome comparison of Mycobacterium tuberculosis clinical and laboratory strains.</title>
        <authorList>
            <person name="Fleischmann R.D."/>
            <person name="Alland D."/>
            <person name="Eisen J.A."/>
            <person name="Carpenter L."/>
            <person name="White O."/>
            <person name="Peterson J.D."/>
            <person name="DeBoy R.T."/>
            <person name="Dodson R.J."/>
            <person name="Gwinn M.L."/>
            <person name="Haft D.H."/>
            <person name="Hickey E.K."/>
            <person name="Kolonay J.F."/>
            <person name="Nelson W.C."/>
            <person name="Umayam L.A."/>
            <person name="Ermolaeva M.D."/>
            <person name="Salzberg S.L."/>
            <person name="Delcher A."/>
            <person name="Utterback T.R."/>
            <person name="Weidman J.F."/>
            <person name="Khouri H.M."/>
            <person name="Gill J."/>
            <person name="Mikula A."/>
            <person name="Bishai W."/>
            <person name="Jacobs W.R. Jr."/>
            <person name="Venter J.C."/>
            <person name="Fraser C.M."/>
        </authorList>
    </citation>
    <scope>NUCLEOTIDE SEQUENCE [LARGE SCALE GENOMIC DNA]</scope>
    <source>
        <strain>CDC 1551 / Oshkosh</strain>
    </source>
</reference>
<gene>
    <name type="primary">mmpL3</name>
    <name type="ordered locus">MT0216</name>
</gene>
<proteinExistence type="inferred from homology"/>
<name>MMPL3_MYCTO</name>
<feature type="chain" id="PRO_0000427764" description="Trehalose monomycolate exporter MmpL3">
    <location>
        <begin position="1"/>
        <end position="944"/>
    </location>
</feature>
<feature type="topological domain" description="Cytoplasmic" evidence="1">
    <location>
        <begin position="1"/>
        <end position="13"/>
    </location>
</feature>
<feature type="transmembrane region" description="Helical" evidence="3">
    <location>
        <begin position="14"/>
        <end position="34"/>
    </location>
</feature>
<feature type="topological domain" description="Periplasmic" evidence="1">
    <location>
        <begin position="35"/>
        <end position="185"/>
    </location>
</feature>
<feature type="transmembrane region" description="Helical" evidence="3">
    <location>
        <begin position="186"/>
        <end position="206"/>
    </location>
</feature>
<feature type="topological domain" description="Cytoplasmic" evidence="1">
    <location>
        <begin position="207"/>
        <end position="209"/>
    </location>
</feature>
<feature type="transmembrane region" description="Helical" evidence="3">
    <location>
        <begin position="210"/>
        <end position="230"/>
    </location>
</feature>
<feature type="topological domain" description="Periplasmic" evidence="1 5">
    <location>
        <begin position="231"/>
        <end position="235"/>
    </location>
</feature>
<feature type="transmembrane region" description="Helical" evidence="3">
    <location>
        <begin position="236"/>
        <end position="256"/>
    </location>
</feature>
<feature type="topological domain" description="Cytoplasmic" evidence="1">
    <location>
        <begin position="257"/>
        <end position="286"/>
    </location>
</feature>
<feature type="transmembrane region" description="Helical" evidence="3">
    <location>
        <begin position="287"/>
        <end position="307"/>
    </location>
</feature>
<feature type="topological domain" description="Periplasmic" evidence="1">
    <location>
        <begin position="308"/>
        <end position="314"/>
    </location>
</feature>
<feature type="transmembrane region" description="Helical" evidence="3">
    <location>
        <begin position="315"/>
        <end position="335"/>
    </location>
</feature>
<feature type="topological domain" description="Cytoplasmic" evidence="1">
    <location>
        <begin position="336"/>
        <end position="396"/>
    </location>
</feature>
<feature type="transmembrane region" description="Helical" evidence="3">
    <location>
        <begin position="397"/>
        <end position="417"/>
    </location>
</feature>
<feature type="topological domain" description="Periplasmic" evidence="1">
    <location>
        <begin position="418"/>
        <end position="562"/>
    </location>
</feature>
<feature type="transmembrane region" description="Helical" evidence="3">
    <location>
        <begin position="563"/>
        <end position="583"/>
    </location>
</feature>
<feature type="topological domain" description="Cytoplasmic" evidence="1">
    <location>
        <begin position="584"/>
        <end position="586"/>
    </location>
</feature>
<feature type="transmembrane region" description="Helical" evidence="3">
    <location>
        <begin position="587"/>
        <end position="607"/>
    </location>
</feature>
<feature type="topological domain" description="Periplasmic" evidence="1">
    <location>
        <begin position="608"/>
        <end position="616"/>
    </location>
</feature>
<feature type="transmembrane region" description="Helical" evidence="3">
    <location>
        <begin position="617"/>
        <end position="637"/>
    </location>
</feature>
<feature type="topological domain" description="Cytoplasmic" evidence="1">
    <location>
        <begin position="638"/>
        <end position="672"/>
    </location>
</feature>
<feature type="transmembrane region" description="Helical" evidence="3">
    <location>
        <begin position="673"/>
        <end position="693"/>
    </location>
</feature>
<feature type="topological domain" description="Periplasmic" evidence="1">
    <location>
        <begin position="694"/>
        <end position="698"/>
    </location>
</feature>
<feature type="transmembrane region" description="Helical" evidence="3">
    <location>
        <begin position="699"/>
        <end position="719"/>
    </location>
</feature>
<feature type="topological domain" description="Cytoplasmic" evidence="1">
    <location>
        <begin position="720"/>
        <end position="944"/>
    </location>
</feature>
<feature type="region of interest" description="Disordered" evidence="4">
    <location>
        <begin position="778"/>
        <end position="944"/>
    </location>
</feature>
<feature type="compositionally biased region" description="Low complexity" evidence="4">
    <location>
        <begin position="791"/>
        <end position="828"/>
    </location>
</feature>
<feature type="compositionally biased region" description="Polar residues" evidence="4">
    <location>
        <begin position="829"/>
        <end position="839"/>
    </location>
</feature>
<feature type="compositionally biased region" description="Pro residues" evidence="4">
    <location>
        <begin position="855"/>
        <end position="866"/>
    </location>
</feature>
<feature type="binding site" evidence="1">
    <location>
        <begin position="40"/>
        <end position="44"/>
    </location>
    <ligand>
        <name>a 1,2-diacylglycero-3-phosphoethanolamine</name>
        <dbReference type="ChEBI" id="CHEBI:57613"/>
    </ligand>
</feature>
<feature type="site" description="Part of the proton-transportation channel" evidence="1">
    <location>
        <position position="251"/>
    </location>
</feature>
<feature type="site" description="Part of the proton-transportation channel" evidence="1">
    <location>
        <position position="252"/>
    </location>
</feature>
<feature type="site" description="Part of the proton transportation network" evidence="1">
    <location>
        <position position="586"/>
    </location>
</feature>
<feature type="site" description="Part of the proton-transportation channel" evidence="1">
    <location>
        <position position="640"/>
    </location>
</feature>
<feature type="site" description="Part of the proton-transportation channel" evidence="1">
    <location>
        <position position="641"/>
    </location>
</feature>
<feature type="site" description="Part of the proton transportation network" evidence="1">
    <location>
        <position position="642"/>
    </location>
</feature>
<keyword id="KW-0997">Cell inner membrane</keyword>
<keyword id="KW-1003">Cell membrane</keyword>
<keyword id="KW-0961">Cell wall biogenesis/degradation</keyword>
<keyword id="KW-0445">Lipid transport</keyword>
<keyword id="KW-0472">Membrane</keyword>
<keyword id="KW-1185">Reference proteome</keyword>
<keyword id="KW-0812">Transmembrane</keyword>
<keyword id="KW-1133">Transmembrane helix</keyword>
<keyword id="KW-0813">Transport</keyword>
<accession>P9WJV4</accession>
<accession>L0T2U3</accession>
<accession>O53657</accession>
<dbReference type="EMBL" id="AE000516">
    <property type="protein sequence ID" value="AAK44437.1"/>
    <property type="molecule type" value="Genomic_DNA"/>
</dbReference>
<dbReference type="PIR" id="C70839">
    <property type="entry name" value="C70839"/>
</dbReference>
<dbReference type="RefSeq" id="WP_010924202.1">
    <property type="nucleotide sequence ID" value="NC_002755.2"/>
</dbReference>
<dbReference type="SMR" id="P9WJV4"/>
<dbReference type="KEGG" id="mtc:MT0216"/>
<dbReference type="HOGENOM" id="CLU_005108_8_0_11"/>
<dbReference type="Proteomes" id="UP000001020">
    <property type="component" value="Chromosome"/>
</dbReference>
<dbReference type="GO" id="GO:0030428">
    <property type="term" value="C:cell septum"/>
    <property type="evidence" value="ECO:0000250"/>
    <property type="project" value="UniProtKB"/>
</dbReference>
<dbReference type="GO" id="GO:0051286">
    <property type="term" value="C:cell tip"/>
    <property type="evidence" value="ECO:0000250"/>
    <property type="project" value="UniProtKB"/>
</dbReference>
<dbReference type="GO" id="GO:0005886">
    <property type="term" value="C:plasma membrane"/>
    <property type="evidence" value="ECO:0007669"/>
    <property type="project" value="UniProtKB-SubCell"/>
</dbReference>
<dbReference type="GO" id="GO:1901612">
    <property type="term" value="F:cardiolipin binding"/>
    <property type="evidence" value="ECO:0000250"/>
    <property type="project" value="UniProtKB"/>
</dbReference>
<dbReference type="GO" id="GO:0019992">
    <property type="term" value="F:diacylglycerol binding"/>
    <property type="evidence" value="ECO:0000250"/>
    <property type="project" value="UniProtKB"/>
</dbReference>
<dbReference type="GO" id="GO:0008429">
    <property type="term" value="F:phosphatidylethanolamine binding"/>
    <property type="evidence" value="ECO:0000250"/>
    <property type="project" value="UniProtKB"/>
</dbReference>
<dbReference type="GO" id="GO:1901611">
    <property type="term" value="F:phosphatidylglycerol binding"/>
    <property type="evidence" value="ECO:0000250"/>
    <property type="project" value="UniProtKB"/>
</dbReference>
<dbReference type="GO" id="GO:0035091">
    <property type="term" value="F:phosphatidylinositol binding"/>
    <property type="evidence" value="ECO:0000250"/>
    <property type="project" value="UniProtKB"/>
</dbReference>
<dbReference type="GO" id="GO:0042546">
    <property type="term" value="P:cell wall biogenesis"/>
    <property type="evidence" value="ECO:0000250"/>
    <property type="project" value="UniProtKB"/>
</dbReference>
<dbReference type="GO" id="GO:0071555">
    <property type="term" value="P:cell wall organization"/>
    <property type="evidence" value="ECO:0007669"/>
    <property type="project" value="UniProtKB-KW"/>
</dbReference>
<dbReference type="GO" id="GO:0006869">
    <property type="term" value="P:lipid transport"/>
    <property type="evidence" value="ECO:0007669"/>
    <property type="project" value="UniProtKB-KW"/>
</dbReference>
<dbReference type="GO" id="GO:0071768">
    <property type="term" value="P:mycolic acid biosynthetic process"/>
    <property type="evidence" value="ECO:0000250"/>
    <property type="project" value="UniProtKB"/>
</dbReference>
<dbReference type="GO" id="GO:0042391">
    <property type="term" value="P:regulation of membrane potential"/>
    <property type="evidence" value="ECO:0000250"/>
    <property type="project" value="UniProtKB"/>
</dbReference>
<dbReference type="GO" id="GO:0046677">
    <property type="term" value="P:response to antibiotic"/>
    <property type="evidence" value="ECO:0000250"/>
    <property type="project" value="UniProtKB"/>
</dbReference>
<dbReference type="Gene3D" id="1.20.1640.10">
    <property type="entry name" value="Multidrug efflux transporter AcrB transmembrane domain"/>
    <property type="match status" value="2"/>
</dbReference>
<dbReference type="InterPro" id="IPR004869">
    <property type="entry name" value="MMPL_dom"/>
</dbReference>
<dbReference type="InterPro" id="IPR050545">
    <property type="entry name" value="Mycobact_MmpL"/>
</dbReference>
<dbReference type="InterPro" id="IPR000731">
    <property type="entry name" value="SSD"/>
</dbReference>
<dbReference type="PANTHER" id="PTHR33406">
    <property type="entry name" value="MEMBRANE PROTEIN MJ1562-RELATED"/>
    <property type="match status" value="1"/>
</dbReference>
<dbReference type="PANTHER" id="PTHR33406:SF11">
    <property type="entry name" value="MEMBRANE PROTEIN SCO6666-RELATED"/>
    <property type="match status" value="1"/>
</dbReference>
<dbReference type="Pfam" id="PF03176">
    <property type="entry name" value="MMPL"/>
    <property type="match status" value="2"/>
</dbReference>
<dbReference type="SUPFAM" id="SSF82866">
    <property type="entry name" value="Multidrug efflux transporter AcrB transmembrane domain"/>
    <property type="match status" value="2"/>
</dbReference>
<dbReference type="PROSITE" id="PS50156">
    <property type="entry name" value="SSD"/>
    <property type="match status" value="1"/>
</dbReference>
<sequence length="944" mass="100890">MFAWWGRTVYRYRFIVIGVMVALCLGGGVFGLSLGKHVTQSGFYDDGSQSVQASVLGDQVYGRDRSGHIVAIFQAPAGKTVDDPAWSKKVVDELNRFQQDHPDQVLGWAGYLRASQATGMATADKKYTFVSIPLKGDDDDTILNNYKAIAPDLQRLDGGTVKLAGLQPVAEALTGTIATDQRRMEVLALPLVAVVLFFVFGGVIAAGLPVMVGGLCIAGALGIMRFLAIFGPVHYFAQPVVSLIGLGIAIDYGLFIVSRFREEIAEGYDTETAVRRTVITAGRTVTFSAVLIVASAIGLLLFPQGFLKSLTYATIASVMLSAILSITVLPACLGILGKHVDALGVRTLFRVPFLANWKISAAYLNWLADRLQRTKTREEVEAGFWGKLVNRVMKRPVLFAAPIVIIMILLIIPVGKLSLGGISEKYLPPTNSVRQAQEEFDKLFPGYRTNPLTLVIQTSNHQPVTDAQIADIRSKAMAIGGFIEPDNDPANMWQERAYAVGASKDPSVRVLQNGLINPADASKKLTELRAITPPKGITVLVGGTPALELDSIHGLFAKMPLMVVILLTTTIVLMFLAFGSVVLPIKATLMSALTLGSTMGILTWIFVDGHFSKWLNFTPTPLTAPVIGLIIALVFGLSTDYEVFLVSRMVEARERGMSTQEAIRIGTAATGRIITAAALIVAVVAGAFVFSDLVMMKYLAFGLMAALLLDATVVRMFLVPSVMKLLGDDCWWAPRWARRLQTRIGLGEIHLPDERNRPVSNGRPARPPVTAGLVAARAAGDPRPPHDPTHPLAESPRPARSSPASSPELTPALEATAAPAAPSGASTTRMQIGSSTEPPTTRLAAAGRSVQSPASTPPPTPTPPSAPSAGQTRAMPLAANRSTDAAGDPAEPTAALPIIRSDGDDSEAATEQLNARGTSDKTRQRRRGGGALSAQDLLRREGRL</sequence>
<evidence type="ECO:0000250" key="1">
    <source>
        <dbReference type="UniProtKB" id="A0QP27"/>
    </source>
</evidence>
<evidence type="ECO:0000250" key="2">
    <source>
        <dbReference type="UniProtKB" id="P9WJV5"/>
    </source>
</evidence>
<evidence type="ECO:0000255" key="3"/>
<evidence type="ECO:0000256" key="4">
    <source>
        <dbReference type="SAM" id="MobiDB-lite"/>
    </source>
</evidence>
<evidence type="ECO:0000305" key="5"/>
<comment type="function">
    <text evidence="1 2">Transports trehalose monomycolate (TMM) to the cell wall. Flips TMM across the inner membrane. Membrane potential is not required for this function. Transports probably phosphatidylethanolamine (PE) as well. Binds specifically both TMM and PE, but not trehalose dimycolate (TDM). Also binds diacylglycerol (DAG) and other phospholipids, including phosphatidylglycerol (PG), phosphatidylinositol (PI), and cardiolipin (CDL). Contributes to membrane potential, cell wall composition, antibiotic susceptibility and fitness (By similarity). Could also be part of a heme-iron acquisition system (By similarity).</text>
</comment>
<comment type="subunit">
    <text evidence="1">Monomer. Interacts with TtfA (via N-terminus); active trehalose monomycolate (TMM) biosynthesis is not required for the complex formation.</text>
</comment>
<comment type="subcellular location">
    <subcellularLocation>
        <location evidence="2">Cell inner membrane</location>
        <topology evidence="3">Multi-pass membrane protein</topology>
    </subcellularLocation>
    <subcellularLocation>
        <location evidence="1">Cell septum</location>
    </subcellularLocation>
    <subcellularLocation>
        <location evidence="1">Cell tip</location>
    </subcellularLocation>
    <text evidence="1">Colocalizes with TtfA to the cell poles and septa. Trehalose monomycolate (TMM) synthesis is not required for localization to the poles or septa.</text>
</comment>
<comment type="similarity">
    <text evidence="5">Belongs to the resistance-nodulation-cell division (RND) (TC 2.A.6) family. MmpL subfamily.</text>
</comment>
<protein>
    <recommendedName>
        <fullName evidence="2">Trehalose monomycolate exporter MmpL3</fullName>
        <shortName evidence="2">TMM exporter MmpL3</shortName>
    </recommendedName>
    <alternativeName>
        <fullName evidence="5">MmpL3 transporter</fullName>
    </alternativeName>
    <alternativeName>
        <fullName evidence="5">Mycobacterial membrane protein large 3</fullName>
    </alternativeName>
</protein>
<organism>
    <name type="scientific">Mycobacterium tuberculosis (strain CDC 1551 / Oshkosh)</name>
    <dbReference type="NCBI Taxonomy" id="83331"/>
    <lineage>
        <taxon>Bacteria</taxon>
        <taxon>Bacillati</taxon>
        <taxon>Actinomycetota</taxon>
        <taxon>Actinomycetes</taxon>
        <taxon>Mycobacteriales</taxon>
        <taxon>Mycobacteriaceae</taxon>
        <taxon>Mycobacterium</taxon>
        <taxon>Mycobacterium tuberculosis complex</taxon>
    </lineage>
</organism>